<dbReference type="EC" id="2.7.13.3" evidence="11"/>
<dbReference type="EMBL" id="AB246778">
    <property type="protein sequence ID" value="BAE97709.1"/>
    <property type="status" value="ALT_INIT"/>
    <property type="molecule type" value="mRNA"/>
</dbReference>
<dbReference type="EMBL" id="BR000245">
    <property type="protein sequence ID" value="FAA00249.1"/>
    <property type="molecule type" value="Genomic_DNA"/>
</dbReference>
<dbReference type="EMBL" id="AC092548">
    <property type="protein sequence ID" value="AAM18726.1"/>
    <property type="status" value="ALT_SEQ"/>
    <property type="molecule type" value="Genomic_DNA"/>
</dbReference>
<dbReference type="EMBL" id="DP000086">
    <property type="protein sequence ID" value="AAP53311.2"/>
    <property type="status" value="ALT_SEQ"/>
    <property type="molecule type" value="Genomic_DNA"/>
</dbReference>
<dbReference type="EMBL" id="AP008216">
    <property type="protein sequence ID" value="BAF26350.2"/>
    <property type="status" value="ALT_SEQ"/>
    <property type="molecule type" value="Genomic_DNA"/>
</dbReference>
<dbReference type="EMBL" id="AP014966">
    <property type="status" value="NOT_ANNOTATED_CDS"/>
    <property type="molecule type" value="Genomic_DNA"/>
</dbReference>
<dbReference type="EMBL" id="CM000147">
    <property type="protein sequence ID" value="EEE50822.1"/>
    <property type="status" value="ALT_SEQ"/>
    <property type="molecule type" value="Genomic_DNA"/>
</dbReference>
<dbReference type="RefSeq" id="XP_015614148.1">
    <property type="nucleotide sequence ID" value="XM_015758662.1"/>
</dbReference>
<dbReference type="SMR" id="A1A697"/>
<dbReference type="FunCoup" id="A1A697">
    <property type="interactions" value="140"/>
</dbReference>
<dbReference type="STRING" id="39947.A1A697"/>
<dbReference type="PaxDb" id="39947-A1A697"/>
<dbReference type="EnsemblPlants" id="Os10t0362300-03">
    <property type="protein sequence ID" value="Os10t0362300-03"/>
    <property type="gene ID" value="Os10g0362300"/>
</dbReference>
<dbReference type="Gramene" id="Os10t0362300-03">
    <property type="protein sequence ID" value="Os10t0362300-03"/>
    <property type="gene ID" value="Os10g0362300"/>
</dbReference>
<dbReference type="KEGG" id="dosa:Os10g0362300"/>
<dbReference type="eggNOG" id="KOG0519">
    <property type="taxonomic scope" value="Eukaryota"/>
</dbReference>
<dbReference type="HOGENOM" id="CLU_449323_0_0_1"/>
<dbReference type="InParanoid" id="A1A697"/>
<dbReference type="OrthoDB" id="10266508at2759"/>
<dbReference type="Proteomes" id="UP000000763">
    <property type="component" value="Chromosome 10"/>
</dbReference>
<dbReference type="Proteomes" id="UP000007752">
    <property type="component" value="Chromosome 10"/>
</dbReference>
<dbReference type="Proteomes" id="UP000059680">
    <property type="component" value="Chromosome 10"/>
</dbReference>
<dbReference type="ExpressionAtlas" id="A1A697">
    <property type="expression patterns" value="baseline and differential"/>
</dbReference>
<dbReference type="GO" id="GO:0005634">
    <property type="term" value="C:nucleus"/>
    <property type="evidence" value="ECO:0000318"/>
    <property type="project" value="GO_Central"/>
</dbReference>
<dbReference type="GO" id="GO:0005886">
    <property type="term" value="C:plasma membrane"/>
    <property type="evidence" value="ECO:0007669"/>
    <property type="project" value="UniProtKB-SubCell"/>
</dbReference>
<dbReference type="GO" id="GO:0000155">
    <property type="term" value="F:phosphorelay sensor kinase activity"/>
    <property type="evidence" value="ECO:0007669"/>
    <property type="project" value="InterPro"/>
</dbReference>
<dbReference type="GO" id="GO:0009736">
    <property type="term" value="P:cytokinin-activated signaling pathway"/>
    <property type="evidence" value="ECO:0007669"/>
    <property type="project" value="UniProtKB-KW"/>
</dbReference>
<dbReference type="CDD" id="cd16922">
    <property type="entry name" value="HATPase_EvgS-ArcB-TorS-like"/>
    <property type="match status" value="1"/>
</dbReference>
<dbReference type="CDD" id="cd00082">
    <property type="entry name" value="HisKA"/>
    <property type="match status" value="1"/>
</dbReference>
<dbReference type="CDD" id="cd17546">
    <property type="entry name" value="REC_hyHK_CKI1_RcsC-like"/>
    <property type="match status" value="1"/>
</dbReference>
<dbReference type="FunFam" id="3.40.50.2300:FF:000137">
    <property type="entry name" value="Histidine kinase 3"/>
    <property type="match status" value="1"/>
</dbReference>
<dbReference type="FunFam" id="1.10.287.130:FF:000015">
    <property type="entry name" value="Histidine kinase 4"/>
    <property type="match status" value="1"/>
</dbReference>
<dbReference type="FunFam" id="3.30.450.350:FF:000001">
    <property type="entry name" value="Histidine kinase 4"/>
    <property type="match status" value="1"/>
</dbReference>
<dbReference type="Gene3D" id="1.10.287.130">
    <property type="match status" value="1"/>
</dbReference>
<dbReference type="Gene3D" id="3.40.50.2300">
    <property type="match status" value="1"/>
</dbReference>
<dbReference type="Gene3D" id="6.10.250.1190">
    <property type="match status" value="1"/>
</dbReference>
<dbReference type="Gene3D" id="3.30.450.350">
    <property type="entry name" value="CHASE domain"/>
    <property type="match status" value="1"/>
</dbReference>
<dbReference type="Gene3D" id="3.30.565.10">
    <property type="entry name" value="Histidine kinase-like ATPase, C-terminal domain"/>
    <property type="match status" value="1"/>
</dbReference>
<dbReference type="InterPro" id="IPR050956">
    <property type="entry name" value="2C_system_His_kinase"/>
</dbReference>
<dbReference type="InterPro" id="IPR006189">
    <property type="entry name" value="CHASE_dom"/>
</dbReference>
<dbReference type="InterPro" id="IPR042240">
    <property type="entry name" value="CHASE_sf"/>
</dbReference>
<dbReference type="InterPro" id="IPR011006">
    <property type="entry name" value="CheY-like_superfamily"/>
</dbReference>
<dbReference type="InterPro" id="IPR036890">
    <property type="entry name" value="HATPase_C_sf"/>
</dbReference>
<dbReference type="InterPro" id="IPR005467">
    <property type="entry name" value="His_kinase_dom"/>
</dbReference>
<dbReference type="InterPro" id="IPR003661">
    <property type="entry name" value="HisK_dim/P_dom"/>
</dbReference>
<dbReference type="InterPro" id="IPR036097">
    <property type="entry name" value="HisK_dim/P_sf"/>
</dbReference>
<dbReference type="InterPro" id="IPR056839">
    <property type="entry name" value="Receiver_AHK4/CRE1_1st"/>
</dbReference>
<dbReference type="InterPro" id="IPR004358">
    <property type="entry name" value="Sig_transdc_His_kin-like_C"/>
</dbReference>
<dbReference type="InterPro" id="IPR001789">
    <property type="entry name" value="Sig_transdc_resp-reg_receiver"/>
</dbReference>
<dbReference type="PANTHER" id="PTHR43719:SF35">
    <property type="entry name" value="HISTIDINE KINASE 2"/>
    <property type="match status" value="1"/>
</dbReference>
<dbReference type="PANTHER" id="PTHR43719">
    <property type="entry name" value="TWO-COMPONENT HISTIDINE KINASE"/>
    <property type="match status" value="1"/>
</dbReference>
<dbReference type="Pfam" id="PF03924">
    <property type="entry name" value="CHASE"/>
    <property type="match status" value="1"/>
</dbReference>
<dbReference type="Pfam" id="PF02518">
    <property type="entry name" value="HATPase_c"/>
    <property type="match status" value="1"/>
</dbReference>
<dbReference type="Pfam" id="PF00512">
    <property type="entry name" value="HisKA"/>
    <property type="match status" value="1"/>
</dbReference>
<dbReference type="Pfam" id="PF24896">
    <property type="entry name" value="Receiver_CRE1"/>
    <property type="match status" value="1"/>
</dbReference>
<dbReference type="Pfam" id="PF00072">
    <property type="entry name" value="Response_reg"/>
    <property type="match status" value="1"/>
</dbReference>
<dbReference type="PRINTS" id="PR00344">
    <property type="entry name" value="BCTRLSENSOR"/>
</dbReference>
<dbReference type="SMART" id="SM01079">
    <property type="entry name" value="CHASE"/>
    <property type="match status" value="1"/>
</dbReference>
<dbReference type="SMART" id="SM00387">
    <property type="entry name" value="HATPase_c"/>
    <property type="match status" value="1"/>
</dbReference>
<dbReference type="SMART" id="SM00388">
    <property type="entry name" value="HisKA"/>
    <property type="match status" value="1"/>
</dbReference>
<dbReference type="SMART" id="SM00448">
    <property type="entry name" value="REC"/>
    <property type="match status" value="1"/>
</dbReference>
<dbReference type="SUPFAM" id="SSF55874">
    <property type="entry name" value="ATPase domain of HSP90 chaperone/DNA topoisomerase II/histidine kinase"/>
    <property type="match status" value="1"/>
</dbReference>
<dbReference type="SUPFAM" id="SSF52172">
    <property type="entry name" value="CheY-like"/>
    <property type="match status" value="2"/>
</dbReference>
<dbReference type="SUPFAM" id="SSF47384">
    <property type="entry name" value="Homodimeric domain of signal transducing histidine kinase"/>
    <property type="match status" value="1"/>
</dbReference>
<dbReference type="PROSITE" id="PS50839">
    <property type="entry name" value="CHASE"/>
    <property type="match status" value="1"/>
</dbReference>
<dbReference type="PROSITE" id="PS50109">
    <property type="entry name" value="HIS_KIN"/>
    <property type="match status" value="1"/>
</dbReference>
<dbReference type="PROSITE" id="PS50110">
    <property type="entry name" value="RESPONSE_REGULATORY"/>
    <property type="match status" value="2"/>
</dbReference>
<feature type="chain" id="PRO_0000433810" description="Probable histidine kinase 5">
    <location>
        <begin position="1"/>
        <end position="1187"/>
    </location>
</feature>
<feature type="topological domain" description="Extracellular" evidence="11">
    <location>
        <begin position="1"/>
        <end position="175"/>
    </location>
</feature>
<feature type="transmembrane region" description="Helical" evidence="2">
    <location>
        <begin position="176"/>
        <end position="196"/>
    </location>
</feature>
<feature type="topological domain" description="Cytoplasmic" evidence="11">
    <location>
        <begin position="197"/>
        <end position="226"/>
    </location>
</feature>
<feature type="transmembrane region" description="Helical" evidence="2">
    <location>
        <begin position="227"/>
        <end position="247"/>
    </location>
</feature>
<feature type="topological domain" description="Extracellular" evidence="11">
    <location>
        <begin position="248"/>
        <end position="531"/>
    </location>
</feature>
<feature type="transmembrane region" description="Helical" evidence="2">
    <location>
        <begin position="532"/>
        <end position="552"/>
    </location>
</feature>
<feature type="topological domain" description="Cytoplasmic" evidence="11">
    <location>
        <begin position="553"/>
        <end position="1187"/>
    </location>
</feature>
<feature type="domain" description="CHASE" evidence="3">
    <location>
        <begin position="295"/>
        <end position="519"/>
    </location>
</feature>
<feature type="domain" description="Histidine kinase" evidence="4">
    <location>
        <begin position="587"/>
        <end position="862"/>
    </location>
</feature>
<feature type="domain" description="Response regulatory 1" evidence="5">
    <location>
        <begin position="886"/>
        <end position="1017"/>
    </location>
</feature>
<feature type="domain" description="Response regulatory 2" evidence="5">
    <location>
        <begin position="1041"/>
        <end position="1178"/>
    </location>
</feature>
<feature type="modified residue" description="Phosphohistidine; by autocatalysis" evidence="4">
    <location>
        <position position="590"/>
    </location>
</feature>
<feature type="modified residue" description="4-aspartylphosphate" evidence="5">
    <location>
        <position position="942"/>
    </location>
</feature>
<feature type="modified residue" description="4-aspartylphosphate" evidence="5">
    <location>
        <position position="1091"/>
    </location>
</feature>
<proteinExistence type="evidence at transcript level"/>
<keyword id="KW-1003">Cell membrane</keyword>
<keyword id="KW-0932">Cytokinin signaling pathway</keyword>
<keyword id="KW-0418">Kinase</keyword>
<keyword id="KW-0472">Membrane</keyword>
<keyword id="KW-0597">Phosphoprotein</keyword>
<keyword id="KW-1185">Reference proteome</keyword>
<keyword id="KW-0677">Repeat</keyword>
<keyword id="KW-0808">Transferase</keyword>
<keyword id="KW-0812">Transmembrane</keyword>
<keyword id="KW-1133">Transmembrane helix</keyword>
<keyword id="KW-0902">Two-component regulatory system</keyword>
<comment type="function">
    <text evidence="1">Cytokinin receptor related to bacterial two-component regulators. Functions as a histidine kinase and transmits the stress signal to a downstream MAPK cascade.</text>
</comment>
<comment type="catalytic activity">
    <reaction evidence="11">
        <text>ATP + protein L-histidine = ADP + protein N-phospho-L-histidine.</text>
        <dbReference type="EC" id="2.7.13.3"/>
    </reaction>
</comment>
<comment type="subcellular location">
    <subcellularLocation>
        <location evidence="11">Cell membrane</location>
        <topology evidence="2">Multi-pass membrane protein</topology>
    </subcellularLocation>
</comment>
<comment type="tissue specificity">
    <text evidence="7">Highly expressed in young leaves and at lower levels in roots, mature leaves, stems and spikelets.</text>
</comment>
<comment type="domain">
    <text evidence="11">Histidine-containing phosphotransfer domain (HPt) contains an active histidine that mediates the phosphotransfer.</text>
</comment>
<comment type="PTM">
    <text evidence="11">Activation probably requires a transfer of a phosphate group between a His in the transmitter domain and an Asp of the receiver domain.</text>
</comment>
<comment type="disruption phenotype">
    <text evidence="6">Extreme dwarf, low tillering and no heading phenotypes.</text>
</comment>
<comment type="sequence caution" evidence="11">
    <conflict type="erroneous gene model prediction">
        <sequence resource="EMBL-CDS" id="AAM18726"/>
    </conflict>
</comment>
<comment type="sequence caution" evidence="11">
    <conflict type="erroneous gene model prediction">
        <sequence resource="EMBL-CDS" id="AAP53311"/>
    </conflict>
</comment>
<comment type="sequence caution" evidence="11">
    <conflict type="erroneous initiation">
        <sequence resource="EMBL-CDS" id="BAE97709"/>
    </conflict>
    <text>Truncated N-terminus.</text>
</comment>
<comment type="sequence caution" evidence="11">
    <conflict type="erroneous gene model prediction">
        <sequence resource="EMBL-CDS" id="BAF26350"/>
    </conflict>
</comment>
<comment type="sequence caution" evidence="11">
    <conflict type="erroneous gene model prediction">
        <sequence resource="EMBL-CDS" id="EEE50822"/>
    </conflict>
</comment>
<sequence>MSRVGECGGGGGCGARRGKAAHAGAGAVAGFLGCLLLVWAMGGCGRGCGGGGGEGVRDRVEEVAAQFNLSMSKLQALASLLSSPERECICKSGTINDDNPAHSMPDMSNCRLKNKPSGGNQNRLDNVIIQDCCANEDNYDKNNHENNLLQNAMQQDIGSPTTLWNQNNALSFNHGMIFSLSASLGIVVILVVITIFKRGKQANELCQHEKLLQTPSVKISRKWSKRALLLGVLVGLCSSVWIFSSMHADVVARRIENLENMCDERARMLQDQFNVSMNHVHALAILVSTFHHGKNPSAIDQKTFEDFTARTTFERPLMSGVAYALKVLHSERELFEQKLGWKIKKMETEDQSLVHDYNPEKLQPSPVQDEYAPVIFSQETVKHIISVDMMSGKEDRDNILRSRATGKGALTAPFPLLKSNHLGVVLTFTVYKYDLPPDATPEERIEATLGYLGASFDVPSLVERLLEQLASKQKIVVRLYDITNHTYPTKMYDSDVIASDDLHISNIDFGDPTRKHVMHCRFKHAPSLPWSAIMISSAVAIIVLLVGYIIYATLNSLEEAEDNYTTMRDLKGRAEAADVAKSQFLATVSHEIRTPMNGVLGMLQMLMDTELDTTQRDFVVTAQESGKSLINLINEVLDLAKIESGKIELEAVRFDVRDILDNVVSLFSEKSWAKGIELAVLVSDQVPDVLIGDPWRFRQIITNLVGNSMKFTEQGHIFIRVHLIEEVKRKMEALDDTSPENIEVTANSKNTMPYNTLSGLEVANNRKTLESFRMFKDSSDAIDSVNLLVTVEDTGIGITKDAQTRIFTPFMQADGSTSRTYGGTGIGLSITKRLVELMGGEIGFVSKPGVSSTFSFTAIFKENRKDPGDIKRYCPEPTPPDFQGMRALVVDGRCARAEVTMYHLRRLGIQCDLAATSESALSALLESCNSSVKSSLNMVLVDKEAWGEDSGLAFFRCLIDLRLKGTLKSWQTMPKFFLLAGSITPADSDCLRLAGYSNSIRKPLRLSTVAACLSKALGVGLTGRRSRDNSLVLRSVLTGKNILVVDDNAVNRIVAAGALKKYGAIVTCVDSGKEAISRLQPPHKFDACFMDVQMPEMDGFEATRLVRSVESKINDTIQAGEVSSEIYGNKAHWHVPILAMTADVIQATFEGCMECGMDGYVAKPFEEQQLYSAVAHFLEADATDPLT</sequence>
<organism>
    <name type="scientific">Oryza sativa subsp. japonica</name>
    <name type="common">Rice</name>
    <dbReference type="NCBI Taxonomy" id="39947"/>
    <lineage>
        <taxon>Eukaryota</taxon>
        <taxon>Viridiplantae</taxon>
        <taxon>Streptophyta</taxon>
        <taxon>Embryophyta</taxon>
        <taxon>Tracheophyta</taxon>
        <taxon>Spermatophyta</taxon>
        <taxon>Magnoliopsida</taxon>
        <taxon>Liliopsida</taxon>
        <taxon>Poales</taxon>
        <taxon>Poaceae</taxon>
        <taxon>BOP clade</taxon>
        <taxon>Oryzoideae</taxon>
        <taxon>Oryzeae</taxon>
        <taxon>Oryzinae</taxon>
        <taxon>Oryza</taxon>
        <taxon>Oryza sativa</taxon>
    </lineage>
</organism>
<accession>A1A697</accession>
<accession>Q0IY65</accession>
<accession>Q14U60</accession>
<accession>Q7G3E3</accession>
<accession>Q8S6P5</accession>
<name>OHK5_ORYSJ</name>
<evidence type="ECO:0000250" key="1">
    <source>
        <dbReference type="UniProtKB" id="A1A698"/>
    </source>
</evidence>
<evidence type="ECO:0000255" key="2"/>
<evidence type="ECO:0000255" key="3">
    <source>
        <dbReference type="PROSITE-ProRule" id="PRU00049"/>
    </source>
</evidence>
<evidence type="ECO:0000255" key="4">
    <source>
        <dbReference type="PROSITE-ProRule" id="PRU00107"/>
    </source>
</evidence>
<evidence type="ECO:0000255" key="5">
    <source>
        <dbReference type="PROSITE-ProRule" id="PRU00169"/>
    </source>
</evidence>
<evidence type="ECO:0000269" key="6">
    <source>
    </source>
</evidence>
<evidence type="ECO:0000269" key="7">
    <source>
    </source>
</evidence>
<evidence type="ECO:0000303" key="8">
    <source>
    </source>
</evidence>
<evidence type="ECO:0000303" key="9">
    <source>
    </source>
</evidence>
<evidence type="ECO:0000303" key="10">
    <source>
    </source>
</evidence>
<evidence type="ECO:0000305" key="11"/>
<evidence type="ECO:0000312" key="12">
    <source>
        <dbReference type="EMBL" id="AAM18726.1"/>
    </source>
</evidence>
<evidence type="ECO:0000312" key="13">
    <source>
        <dbReference type="EMBL" id="AAP53311.2"/>
    </source>
</evidence>
<evidence type="ECO:0000312" key="14">
    <source>
        <dbReference type="EMBL" id="BAF26350.2"/>
    </source>
</evidence>
<evidence type="ECO:0000312" key="15">
    <source>
        <dbReference type="EMBL" id="EEE50822.1"/>
    </source>
</evidence>
<reference key="1">
    <citation type="journal article" date="2006" name="Gene">
        <title>Identification and characterization of cytokinin-signalling gene families in rice.</title>
        <authorList>
            <person name="Ito Y."/>
            <person name="Kurata N."/>
        </authorList>
    </citation>
    <scope>NUCLEOTIDE SEQUENCE [GENOMIC DNA / MRNA]</scope>
    <source>
        <strain>cv. Nipponbare</strain>
    </source>
</reference>
<reference key="2">
    <citation type="journal article" date="2003" name="Science">
        <title>In-depth view of structure, activity, and evolution of rice chromosome 10.</title>
        <authorList>
            <person name="Yu Y."/>
            <person name="Rambo T."/>
            <person name="Currie J."/>
            <person name="Saski C."/>
            <person name="Kim H.-R."/>
            <person name="Collura K."/>
            <person name="Thompson S."/>
            <person name="Simmons J."/>
            <person name="Yang T.-J."/>
            <person name="Nah G."/>
            <person name="Patel A.J."/>
            <person name="Thurmond S."/>
            <person name="Henry D."/>
            <person name="Oates R."/>
            <person name="Palmer M."/>
            <person name="Pries G."/>
            <person name="Gibson J."/>
            <person name="Anderson H."/>
            <person name="Paradkar M."/>
            <person name="Crane L."/>
            <person name="Dale J."/>
            <person name="Carver M.B."/>
            <person name="Wood T."/>
            <person name="Frisch D."/>
            <person name="Engler F."/>
            <person name="Soderlund C."/>
            <person name="Palmer L.E."/>
            <person name="Teytelman L."/>
            <person name="Nascimento L."/>
            <person name="De la Bastide M."/>
            <person name="Spiegel L."/>
            <person name="Ware D."/>
            <person name="O'Shaughnessy A."/>
            <person name="Dike S."/>
            <person name="Dedhia N."/>
            <person name="Preston R."/>
            <person name="Huang E."/>
            <person name="Ferraro K."/>
            <person name="Kuit K."/>
            <person name="Miller B."/>
            <person name="Zutavern T."/>
            <person name="Katzenberger F."/>
            <person name="Muller S."/>
            <person name="Balija V."/>
            <person name="Martienssen R.A."/>
            <person name="Stein L."/>
            <person name="Minx P."/>
            <person name="Johnson D."/>
            <person name="Cordum H."/>
            <person name="Mardis E."/>
            <person name="Cheng Z."/>
            <person name="Jiang J."/>
            <person name="Wilson R."/>
            <person name="McCombie W.R."/>
            <person name="Wing R.A."/>
            <person name="Yuan Q."/>
            <person name="Ouyang S."/>
            <person name="Liu J."/>
            <person name="Jones K.M."/>
            <person name="Gansberger K."/>
            <person name="Moffat K."/>
            <person name="Hill J."/>
            <person name="Tsitrin T."/>
            <person name="Overton L."/>
            <person name="Bera J."/>
            <person name="Kim M."/>
            <person name="Jin S."/>
            <person name="Tallon L."/>
            <person name="Ciecko A."/>
            <person name="Pai G."/>
            <person name="Van Aken S."/>
            <person name="Utterback T."/>
            <person name="Reidmuller S."/>
            <person name="Bormann J."/>
            <person name="Feldblyum T."/>
            <person name="Hsiao J."/>
            <person name="Zismann V."/>
            <person name="Blunt S."/>
            <person name="de Vazeille A.R."/>
            <person name="Shaffer T."/>
            <person name="Koo H."/>
            <person name="Suh B."/>
            <person name="Yang Q."/>
            <person name="Haas B."/>
            <person name="Peterson J."/>
            <person name="Pertea M."/>
            <person name="Volfovsky N."/>
            <person name="Wortman J."/>
            <person name="White O."/>
            <person name="Salzberg S.L."/>
            <person name="Fraser C.M."/>
            <person name="Buell C.R."/>
            <person name="Messing J."/>
            <person name="Song R."/>
            <person name="Fuks G."/>
            <person name="Llaca V."/>
            <person name="Kovchak S."/>
            <person name="Young S."/>
            <person name="Bowers J.E."/>
            <person name="Paterson A.H."/>
            <person name="Johns M.A."/>
            <person name="Mao L."/>
            <person name="Pan H."/>
            <person name="Dean R.A."/>
        </authorList>
    </citation>
    <scope>NUCLEOTIDE SEQUENCE [LARGE SCALE GENOMIC DNA]</scope>
    <source>
        <strain>cv. Nipponbare</strain>
    </source>
</reference>
<reference key="3">
    <citation type="journal article" date="2005" name="Nature">
        <title>The map-based sequence of the rice genome.</title>
        <authorList>
            <consortium name="International rice genome sequencing project (IRGSP)"/>
        </authorList>
    </citation>
    <scope>NUCLEOTIDE SEQUENCE [LARGE SCALE GENOMIC DNA]</scope>
    <source>
        <strain>cv. Nipponbare</strain>
    </source>
</reference>
<reference key="4">
    <citation type="journal article" date="2008" name="Nucleic Acids Res.">
        <title>The rice annotation project database (RAP-DB): 2008 update.</title>
        <authorList>
            <consortium name="The rice annotation project (RAP)"/>
        </authorList>
    </citation>
    <scope>GENOME REANNOTATION</scope>
    <source>
        <strain>cv. Nipponbare</strain>
    </source>
</reference>
<reference key="5">
    <citation type="journal article" date="2013" name="Rice">
        <title>Improvement of the Oryza sativa Nipponbare reference genome using next generation sequence and optical map data.</title>
        <authorList>
            <person name="Kawahara Y."/>
            <person name="de la Bastide M."/>
            <person name="Hamilton J.P."/>
            <person name="Kanamori H."/>
            <person name="McCombie W.R."/>
            <person name="Ouyang S."/>
            <person name="Schwartz D.C."/>
            <person name="Tanaka T."/>
            <person name="Wu J."/>
            <person name="Zhou S."/>
            <person name="Childs K.L."/>
            <person name="Davidson R.M."/>
            <person name="Lin H."/>
            <person name="Quesada-Ocampo L."/>
            <person name="Vaillancourt B."/>
            <person name="Sakai H."/>
            <person name="Lee S.S."/>
            <person name="Kim J."/>
            <person name="Numa H."/>
            <person name="Itoh T."/>
            <person name="Buell C.R."/>
            <person name="Matsumoto T."/>
        </authorList>
    </citation>
    <scope>GENOME REANNOTATION</scope>
    <source>
        <strain>cv. Nipponbare</strain>
    </source>
</reference>
<reference key="6">
    <citation type="journal article" date="2005" name="PLoS Biol.">
        <title>The genomes of Oryza sativa: a history of duplications.</title>
        <authorList>
            <person name="Yu J."/>
            <person name="Wang J."/>
            <person name="Lin W."/>
            <person name="Li S."/>
            <person name="Li H."/>
            <person name="Zhou J."/>
            <person name="Ni P."/>
            <person name="Dong W."/>
            <person name="Hu S."/>
            <person name="Zeng C."/>
            <person name="Zhang J."/>
            <person name="Zhang Y."/>
            <person name="Li R."/>
            <person name="Xu Z."/>
            <person name="Li S."/>
            <person name="Li X."/>
            <person name="Zheng H."/>
            <person name="Cong L."/>
            <person name="Lin L."/>
            <person name="Yin J."/>
            <person name="Geng J."/>
            <person name="Li G."/>
            <person name="Shi J."/>
            <person name="Liu J."/>
            <person name="Lv H."/>
            <person name="Li J."/>
            <person name="Wang J."/>
            <person name="Deng Y."/>
            <person name="Ran L."/>
            <person name="Shi X."/>
            <person name="Wang X."/>
            <person name="Wu Q."/>
            <person name="Li C."/>
            <person name="Ren X."/>
            <person name="Wang J."/>
            <person name="Wang X."/>
            <person name="Li D."/>
            <person name="Liu D."/>
            <person name="Zhang X."/>
            <person name="Ji Z."/>
            <person name="Zhao W."/>
            <person name="Sun Y."/>
            <person name="Zhang Z."/>
            <person name="Bao J."/>
            <person name="Han Y."/>
            <person name="Dong L."/>
            <person name="Ji J."/>
            <person name="Chen P."/>
            <person name="Wu S."/>
            <person name="Liu J."/>
            <person name="Xiao Y."/>
            <person name="Bu D."/>
            <person name="Tan J."/>
            <person name="Yang L."/>
            <person name="Ye C."/>
            <person name="Zhang J."/>
            <person name="Xu J."/>
            <person name="Zhou Y."/>
            <person name="Yu Y."/>
            <person name="Zhang B."/>
            <person name="Zhuang S."/>
            <person name="Wei H."/>
            <person name="Liu B."/>
            <person name="Lei M."/>
            <person name="Yu H."/>
            <person name="Li Y."/>
            <person name="Xu H."/>
            <person name="Wei S."/>
            <person name="He X."/>
            <person name="Fang L."/>
            <person name="Zhang Z."/>
            <person name="Zhang Y."/>
            <person name="Huang X."/>
            <person name="Su Z."/>
            <person name="Tong W."/>
            <person name="Li J."/>
            <person name="Tong Z."/>
            <person name="Li S."/>
            <person name="Ye J."/>
            <person name="Wang L."/>
            <person name="Fang L."/>
            <person name="Lei T."/>
            <person name="Chen C.-S."/>
            <person name="Chen H.-C."/>
            <person name="Xu Z."/>
            <person name="Li H."/>
            <person name="Huang H."/>
            <person name="Zhang F."/>
            <person name="Xu H."/>
            <person name="Li N."/>
            <person name="Zhao C."/>
            <person name="Li S."/>
            <person name="Dong L."/>
            <person name="Huang Y."/>
            <person name="Li L."/>
            <person name="Xi Y."/>
            <person name="Qi Q."/>
            <person name="Li W."/>
            <person name="Zhang B."/>
            <person name="Hu W."/>
            <person name="Zhang Y."/>
            <person name="Tian X."/>
            <person name="Jiao Y."/>
            <person name="Liang X."/>
            <person name="Jin J."/>
            <person name="Gao L."/>
            <person name="Zheng W."/>
            <person name="Hao B."/>
            <person name="Liu S.-M."/>
            <person name="Wang W."/>
            <person name="Yuan L."/>
            <person name="Cao M."/>
            <person name="McDermott J."/>
            <person name="Samudrala R."/>
            <person name="Wang J."/>
            <person name="Wong G.K.-S."/>
            <person name="Yang H."/>
        </authorList>
    </citation>
    <scope>NUCLEOTIDE SEQUENCE [LARGE SCALE GENOMIC DNA]</scope>
    <source>
        <strain>cv. Nipponbare</strain>
    </source>
</reference>
<reference key="7">
    <citation type="journal article" date="2006" name="Plant Physiol.">
        <title>Whole-genome analysis of Oryza sativa reveals similar architecture of two-component signaling machinery with Arabidopsis.</title>
        <authorList>
            <person name="Pareek A."/>
            <person name="Singh A."/>
            <person name="Kumar M."/>
            <person name="Kushwaha H.R."/>
            <person name="Lynn A.M."/>
            <person name="Singla-Pareek S.L."/>
        </authorList>
    </citation>
    <scope>DISRUPTION PHENOTYPE</scope>
</reference>
<reference key="8">
    <citation type="journal article" date="2007" name="Plant Physiol.">
        <title>Nomenclature for two-component signaling elements of rice.</title>
        <authorList>
            <person name="Schaller G.E."/>
            <person name="Doi K."/>
            <person name="Hwang I."/>
            <person name="Kieber J.J."/>
            <person name="Khurana J.P."/>
            <person name="Kurata N."/>
            <person name="Mizuno T."/>
            <person name="Pareek A."/>
            <person name="Shiu S.H."/>
            <person name="Wu P."/>
            <person name="Yip W.K."/>
        </authorList>
    </citation>
    <scope>GENE FAMILY</scope>
    <scope>NOMENCLATURE</scope>
</reference>
<reference key="9">
    <citation type="journal article" date="2012" name="Plant Cell Physiol.">
        <title>Functional identification of OsHk6 as a homotypic cytokinin receptor in rice with preferential affinity for iP.</title>
        <authorList>
            <person name="Choi J."/>
            <person name="Lee J."/>
            <person name="Kim K."/>
            <person name="Cho M."/>
            <person name="Ryu H."/>
            <person name="An G."/>
            <person name="Hwang I."/>
        </authorList>
    </citation>
    <scope>TISSUE SPECIFICITY</scope>
</reference>
<protein>
    <recommendedName>
        <fullName evidence="11">Probable histidine kinase 5</fullName>
        <shortName evidence="10">OsHK5</shortName>
        <ecNumber evidence="11">2.7.13.3</ecNumber>
    </recommendedName>
    <alternativeName>
        <fullName evidence="11">OsCRL3</fullName>
    </alternativeName>
</protein>
<gene>
    <name evidence="9" type="primary">HK5</name>
    <name evidence="8" type="synonym">OHK3</name>
    <name evidence="14" type="ordered locus">Os10g0362300</name>
    <name evidence="13" type="ordered locus">LOC_Os10g21810</name>
    <name evidence="15" type="ORF">OsJ_31230</name>
    <name evidence="12" type="ORF">OSJNBa0073L01.1</name>
</gene>